<gene>
    <name evidence="1" type="primary">mtnC</name>
    <name type="ordered locus">LEPBI_I2960</name>
</gene>
<evidence type="ECO:0000255" key="1">
    <source>
        <dbReference type="HAMAP-Rule" id="MF_01681"/>
    </source>
</evidence>
<reference key="1">
    <citation type="journal article" date="2008" name="PLoS ONE">
        <title>Genome sequence of the saprophyte Leptospira biflexa provides insights into the evolution of Leptospira and the pathogenesis of leptospirosis.</title>
        <authorList>
            <person name="Picardeau M."/>
            <person name="Bulach D.M."/>
            <person name="Bouchier C."/>
            <person name="Zuerner R.L."/>
            <person name="Zidane N."/>
            <person name="Wilson P.J."/>
            <person name="Creno S."/>
            <person name="Kuczek E.S."/>
            <person name="Bommezzadri S."/>
            <person name="Davis J.C."/>
            <person name="McGrath A."/>
            <person name="Johnson M.J."/>
            <person name="Boursaux-Eude C."/>
            <person name="Seemann T."/>
            <person name="Rouy Z."/>
            <person name="Coppel R.L."/>
            <person name="Rood J.I."/>
            <person name="Lajus A."/>
            <person name="Davies J.K."/>
            <person name="Medigue C."/>
            <person name="Adler B."/>
        </authorList>
    </citation>
    <scope>NUCLEOTIDE SEQUENCE [LARGE SCALE GENOMIC DNA]</scope>
    <source>
        <strain>Patoc 1 / ATCC 23582 / Paris</strain>
    </source>
</reference>
<proteinExistence type="inferred from homology"/>
<dbReference type="EC" id="3.1.3.77" evidence="1"/>
<dbReference type="EMBL" id="CP000786">
    <property type="protein sequence ID" value="ABZ99028.1"/>
    <property type="molecule type" value="Genomic_DNA"/>
</dbReference>
<dbReference type="RefSeq" id="WP_012389886.1">
    <property type="nucleotide sequence ID" value="NC_010602.1"/>
</dbReference>
<dbReference type="SMR" id="B0SP16"/>
<dbReference type="STRING" id="456481.LEPBI_I2960"/>
<dbReference type="KEGG" id="lbi:LEPBI_I2960"/>
<dbReference type="HOGENOM" id="CLU_023273_0_0_12"/>
<dbReference type="OrthoDB" id="9797416at2"/>
<dbReference type="BioCyc" id="LBIF456481:LEPBI_RS14500-MONOMER"/>
<dbReference type="UniPathway" id="UPA00904">
    <property type="reaction ID" value="UER00876"/>
</dbReference>
<dbReference type="UniPathway" id="UPA00904">
    <property type="reaction ID" value="UER00877"/>
</dbReference>
<dbReference type="Proteomes" id="UP000001847">
    <property type="component" value="Chromosome I"/>
</dbReference>
<dbReference type="GO" id="GO:0043715">
    <property type="term" value="F:2,3-diketo-5-methylthiopentyl-1-phosphate enolase activity"/>
    <property type="evidence" value="ECO:0007669"/>
    <property type="project" value="UniProtKB-UniRule"/>
</dbReference>
<dbReference type="GO" id="GO:0043716">
    <property type="term" value="F:2-hydroxy-3-keto-5-methylthiopentenyl-1-phosphate phosphatase activity"/>
    <property type="evidence" value="ECO:0007669"/>
    <property type="project" value="UniProtKB-UniRule"/>
</dbReference>
<dbReference type="GO" id="GO:0043874">
    <property type="term" value="F:acireductone synthase activity"/>
    <property type="evidence" value="ECO:0007669"/>
    <property type="project" value="UniProtKB-EC"/>
</dbReference>
<dbReference type="GO" id="GO:0000287">
    <property type="term" value="F:magnesium ion binding"/>
    <property type="evidence" value="ECO:0007669"/>
    <property type="project" value="UniProtKB-UniRule"/>
</dbReference>
<dbReference type="GO" id="GO:0019509">
    <property type="term" value="P:L-methionine salvage from methylthioadenosine"/>
    <property type="evidence" value="ECO:0007669"/>
    <property type="project" value="UniProtKB-UniRule"/>
</dbReference>
<dbReference type="CDD" id="cd01629">
    <property type="entry name" value="HAD_EP"/>
    <property type="match status" value="1"/>
</dbReference>
<dbReference type="Gene3D" id="1.10.720.60">
    <property type="match status" value="1"/>
</dbReference>
<dbReference type="Gene3D" id="3.40.50.1000">
    <property type="entry name" value="HAD superfamily/HAD-like"/>
    <property type="match status" value="1"/>
</dbReference>
<dbReference type="HAMAP" id="MF_01681">
    <property type="entry name" value="Salvage_MtnC"/>
    <property type="match status" value="1"/>
</dbReference>
<dbReference type="InterPro" id="IPR023943">
    <property type="entry name" value="Enolase-ppase_E1"/>
</dbReference>
<dbReference type="InterPro" id="IPR036412">
    <property type="entry name" value="HAD-like_sf"/>
</dbReference>
<dbReference type="InterPro" id="IPR023214">
    <property type="entry name" value="HAD_sf"/>
</dbReference>
<dbReference type="NCBIfam" id="TIGR01691">
    <property type="entry name" value="enolase-ppase"/>
    <property type="match status" value="1"/>
</dbReference>
<dbReference type="PANTHER" id="PTHR20371">
    <property type="entry name" value="ENOLASE-PHOSPHATASE E1"/>
    <property type="match status" value="1"/>
</dbReference>
<dbReference type="PANTHER" id="PTHR20371:SF1">
    <property type="entry name" value="ENOLASE-PHOSPHATASE E1"/>
    <property type="match status" value="1"/>
</dbReference>
<dbReference type="SFLD" id="SFLDG01133">
    <property type="entry name" value="C1.5.4:_Enolase-phosphatase_Li"/>
    <property type="match status" value="1"/>
</dbReference>
<dbReference type="SFLD" id="SFLDS00003">
    <property type="entry name" value="Haloacid_Dehalogenase"/>
    <property type="match status" value="1"/>
</dbReference>
<dbReference type="SUPFAM" id="SSF56784">
    <property type="entry name" value="HAD-like"/>
    <property type="match status" value="1"/>
</dbReference>
<accession>B0SP16</accession>
<feature type="chain" id="PRO_0000357376" description="Enolase-phosphatase E1">
    <location>
        <begin position="1"/>
        <end position="247"/>
    </location>
</feature>
<organism>
    <name type="scientific">Leptospira biflexa serovar Patoc (strain Patoc 1 / ATCC 23582 / Paris)</name>
    <dbReference type="NCBI Taxonomy" id="456481"/>
    <lineage>
        <taxon>Bacteria</taxon>
        <taxon>Pseudomonadati</taxon>
        <taxon>Spirochaetota</taxon>
        <taxon>Spirochaetia</taxon>
        <taxon>Leptospirales</taxon>
        <taxon>Leptospiraceae</taxon>
        <taxon>Leptospira</taxon>
    </lineage>
</organism>
<protein>
    <recommendedName>
        <fullName evidence="1">Enolase-phosphatase E1</fullName>
        <ecNumber evidence="1">3.1.3.77</ecNumber>
    </recommendedName>
    <alternativeName>
        <fullName evidence="1">2,3-diketo-5-methylthio-1-phosphopentane phosphatase</fullName>
    </alternativeName>
</protein>
<sequence length="247" mass="28335">MQIKHNLLDIEGTTAPIAFVHQILFPYATKNIHRFLKEYQLTELQWKEVQTEFQKDTSSGDPLFIEKFRIKNVPSGLIVNEVPNTLSKDMVSVYFEYLIEKDRKFGPLKEIQGKIWKEGYESGEIKSTVFDDVPKFLNDAIQSGIQNHVYSSGSVEAQHLIYQYSVLGDLRQYFTMYFDTAVGGKREKTSYERIASTLAVSPSEIRFFTDIVEEAEAANATGMDVVILNRPGNLAQKPHPFPVWEHF</sequence>
<comment type="function">
    <text evidence="1">Bifunctional enzyme that catalyzes the enolization of 2,3-diketo-5-methylthiopentyl-1-phosphate (DK-MTP-1-P) into the intermediate 2-hydroxy-3-keto-5-methylthiopentenyl-1-phosphate (HK-MTPenyl-1-P), which is then dephosphorylated to form the acireductone 1,2-dihydroxy-3-keto-5-methylthiopentene (DHK-MTPene).</text>
</comment>
<comment type="catalytic activity">
    <reaction evidence="1">
        <text>5-methylsulfanyl-2,3-dioxopentyl phosphate + H2O = 1,2-dihydroxy-5-(methylsulfanyl)pent-1-en-3-one + phosphate</text>
        <dbReference type="Rhea" id="RHEA:21700"/>
        <dbReference type="ChEBI" id="CHEBI:15377"/>
        <dbReference type="ChEBI" id="CHEBI:43474"/>
        <dbReference type="ChEBI" id="CHEBI:49252"/>
        <dbReference type="ChEBI" id="CHEBI:58828"/>
        <dbReference type="EC" id="3.1.3.77"/>
    </reaction>
</comment>
<comment type="cofactor">
    <cofactor evidence="1">
        <name>Mg(2+)</name>
        <dbReference type="ChEBI" id="CHEBI:18420"/>
    </cofactor>
    <text evidence="1">Binds 1 Mg(2+) ion per subunit.</text>
</comment>
<comment type="pathway">
    <text evidence="1">Amino-acid biosynthesis; L-methionine biosynthesis via salvage pathway; L-methionine from S-methyl-5-thio-alpha-D-ribose 1-phosphate: step 3/6.</text>
</comment>
<comment type="pathway">
    <text evidence="1">Amino-acid biosynthesis; L-methionine biosynthesis via salvage pathway; L-methionine from S-methyl-5-thio-alpha-D-ribose 1-phosphate: step 4/6.</text>
</comment>
<comment type="subunit">
    <text evidence="1">Monomer.</text>
</comment>
<comment type="similarity">
    <text evidence="1">Belongs to the HAD-like hydrolase superfamily. MasA/MtnC family.</text>
</comment>
<name>MTNC_LEPBP</name>
<keyword id="KW-0028">Amino-acid biosynthesis</keyword>
<keyword id="KW-0378">Hydrolase</keyword>
<keyword id="KW-0460">Magnesium</keyword>
<keyword id="KW-0479">Metal-binding</keyword>
<keyword id="KW-0486">Methionine biosynthesis</keyword>
<keyword id="KW-1185">Reference proteome</keyword>